<proteinExistence type="inferred from homology"/>
<keyword id="KW-0285">Flavoprotein</keyword>
<keyword id="KW-0288">FMN</keyword>
<keyword id="KW-0520">NAD</keyword>
<keyword id="KW-0521">NADP</keyword>
<keyword id="KW-0547">Nucleotide-binding</keyword>
<keyword id="KW-0560">Oxidoreductase</keyword>
<accession>Q46B88</accession>
<gene>
    <name type="ordered locus">Mbar_A1914</name>
</gene>
<protein>
    <recommendedName>
        <fullName evidence="1">NAD(P)H dehydrogenase (quinone)</fullName>
        <ecNumber evidence="1">1.6.5.2</ecNumber>
    </recommendedName>
    <alternativeName>
        <fullName>Flavoprotein WrbA</fullName>
    </alternativeName>
    <alternativeName>
        <fullName evidence="1">NAD(P)H:quinone oxidoreductase</fullName>
        <shortName evidence="1">NQO</shortName>
    </alternativeName>
</protein>
<comment type="catalytic activity">
    <reaction evidence="1">
        <text>a quinone + NADH + H(+) = a quinol + NAD(+)</text>
        <dbReference type="Rhea" id="RHEA:46160"/>
        <dbReference type="ChEBI" id="CHEBI:15378"/>
        <dbReference type="ChEBI" id="CHEBI:24646"/>
        <dbReference type="ChEBI" id="CHEBI:57540"/>
        <dbReference type="ChEBI" id="CHEBI:57945"/>
        <dbReference type="ChEBI" id="CHEBI:132124"/>
        <dbReference type="EC" id="1.6.5.2"/>
    </reaction>
</comment>
<comment type="catalytic activity">
    <reaction evidence="1">
        <text>a quinone + NADPH + H(+) = a quinol + NADP(+)</text>
        <dbReference type="Rhea" id="RHEA:46164"/>
        <dbReference type="ChEBI" id="CHEBI:15378"/>
        <dbReference type="ChEBI" id="CHEBI:24646"/>
        <dbReference type="ChEBI" id="CHEBI:57783"/>
        <dbReference type="ChEBI" id="CHEBI:58349"/>
        <dbReference type="ChEBI" id="CHEBI:132124"/>
        <dbReference type="EC" id="1.6.5.2"/>
    </reaction>
</comment>
<comment type="cofactor">
    <cofactor evidence="1">
        <name>FMN</name>
        <dbReference type="ChEBI" id="CHEBI:58210"/>
    </cofactor>
    <text evidence="1">Binds 1 FMN per monomer.</text>
</comment>
<comment type="similarity">
    <text evidence="1">Belongs to the WrbA family.</text>
</comment>
<evidence type="ECO:0000255" key="1">
    <source>
        <dbReference type="HAMAP-Rule" id="MF_01017"/>
    </source>
</evidence>
<sequence>MVKVNVIFHSIHGHTYKMAEAIAEGAREVEGAEVEIYQVPETLPYEVLEKMGAIETKNLFAHIPVVTRSMYEDVFAGADALIFGTPTRYGNMTAQMRTVFDGLGGLWSRDALVGKVGSVFTSSGTQHGGQESTILTTHVTLLHLGMIIVGLPYSETRQRRMDEITGGSPYGASTIAGAEENRQPSENELAMARYQGRHVTQIAKKLIG</sequence>
<reference key="1">
    <citation type="journal article" date="2006" name="J. Bacteriol.">
        <title>The Methanosarcina barkeri genome: comparative analysis with Methanosarcina acetivorans and Methanosarcina mazei reveals extensive rearrangement within methanosarcinal genomes.</title>
        <authorList>
            <person name="Maeder D.L."/>
            <person name="Anderson I."/>
            <person name="Brettin T.S."/>
            <person name="Bruce D.C."/>
            <person name="Gilna P."/>
            <person name="Han C.S."/>
            <person name="Lapidus A."/>
            <person name="Metcalf W.W."/>
            <person name="Saunders E."/>
            <person name="Tapia R."/>
            <person name="Sowers K.R."/>
        </authorList>
    </citation>
    <scope>NUCLEOTIDE SEQUENCE [LARGE SCALE GENOMIC DNA]</scope>
    <source>
        <strain>Fusaro / DSM 804</strain>
    </source>
</reference>
<organism>
    <name type="scientific">Methanosarcina barkeri (strain Fusaro / DSM 804)</name>
    <dbReference type="NCBI Taxonomy" id="269797"/>
    <lineage>
        <taxon>Archaea</taxon>
        <taxon>Methanobacteriati</taxon>
        <taxon>Methanobacteriota</taxon>
        <taxon>Stenosarchaea group</taxon>
        <taxon>Methanomicrobia</taxon>
        <taxon>Methanosarcinales</taxon>
        <taxon>Methanosarcinaceae</taxon>
        <taxon>Methanosarcina</taxon>
    </lineage>
</organism>
<feature type="chain" id="PRO_0000291039" description="NAD(P)H dehydrogenase (quinone)">
    <location>
        <begin position="1"/>
        <end position="208"/>
    </location>
</feature>
<feature type="domain" description="Flavodoxin-like" evidence="1">
    <location>
        <begin position="4"/>
        <end position="199"/>
    </location>
</feature>
<feature type="binding site" evidence="1">
    <location>
        <begin position="10"/>
        <end position="15"/>
    </location>
    <ligand>
        <name>FMN</name>
        <dbReference type="ChEBI" id="CHEBI:58210"/>
    </ligand>
</feature>
<feature type="binding site" evidence="1">
    <location>
        <begin position="87"/>
        <end position="89"/>
    </location>
    <ligand>
        <name>FMN</name>
        <dbReference type="ChEBI" id="CHEBI:58210"/>
    </ligand>
</feature>
<feature type="binding site" evidence="1">
    <location>
        <position position="107"/>
    </location>
    <ligand>
        <name>substrate</name>
    </ligand>
</feature>
<feature type="binding site" evidence="1">
    <location>
        <begin position="122"/>
        <end position="128"/>
    </location>
    <ligand>
        <name>FMN</name>
        <dbReference type="ChEBI" id="CHEBI:58210"/>
    </ligand>
</feature>
<feature type="binding site" evidence="1">
    <location>
        <position position="143"/>
    </location>
    <ligand>
        <name>FMN</name>
        <dbReference type="ChEBI" id="CHEBI:58210"/>
    </ligand>
</feature>
<dbReference type="EC" id="1.6.5.2" evidence="1"/>
<dbReference type="EMBL" id="CP000099">
    <property type="protein sequence ID" value="AAZ70854.1"/>
    <property type="molecule type" value="Genomic_DNA"/>
</dbReference>
<dbReference type="SMR" id="Q46B88"/>
<dbReference type="STRING" id="269797.Mbar_A1914"/>
<dbReference type="PaxDb" id="269797-Mbar_A1914"/>
<dbReference type="KEGG" id="mba:Mbar_A1914"/>
<dbReference type="eggNOG" id="arCOG00510">
    <property type="taxonomic scope" value="Archaea"/>
</dbReference>
<dbReference type="HOGENOM" id="CLU_051402_0_2_2"/>
<dbReference type="OrthoDB" id="9059at2157"/>
<dbReference type="GO" id="GO:0016020">
    <property type="term" value="C:membrane"/>
    <property type="evidence" value="ECO:0007669"/>
    <property type="project" value="TreeGrafter"/>
</dbReference>
<dbReference type="GO" id="GO:0009055">
    <property type="term" value="F:electron transfer activity"/>
    <property type="evidence" value="ECO:0007669"/>
    <property type="project" value="InterPro"/>
</dbReference>
<dbReference type="GO" id="GO:0050660">
    <property type="term" value="F:flavin adenine dinucleotide binding"/>
    <property type="evidence" value="ECO:0007669"/>
    <property type="project" value="UniProtKB-UniRule"/>
</dbReference>
<dbReference type="GO" id="GO:0010181">
    <property type="term" value="F:FMN binding"/>
    <property type="evidence" value="ECO:0007669"/>
    <property type="project" value="InterPro"/>
</dbReference>
<dbReference type="GO" id="GO:0051287">
    <property type="term" value="F:NAD binding"/>
    <property type="evidence" value="ECO:0007669"/>
    <property type="project" value="UniProtKB-UniRule"/>
</dbReference>
<dbReference type="GO" id="GO:0050136">
    <property type="term" value="F:NADH:ubiquinone reductase (non-electrogenic) activity"/>
    <property type="evidence" value="ECO:0007669"/>
    <property type="project" value="RHEA"/>
</dbReference>
<dbReference type="GO" id="GO:0050661">
    <property type="term" value="F:NADP binding"/>
    <property type="evidence" value="ECO:0007669"/>
    <property type="project" value="UniProtKB-UniRule"/>
</dbReference>
<dbReference type="GO" id="GO:0008753">
    <property type="term" value="F:NADPH dehydrogenase (quinone) activity"/>
    <property type="evidence" value="ECO:0007669"/>
    <property type="project" value="RHEA"/>
</dbReference>
<dbReference type="FunFam" id="3.40.50.360:FF:000001">
    <property type="entry name" value="NAD(P)H dehydrogenase (Quinone) FQR1-like"/>
    <property type="match status" value="1"/>
</dbReference>
<dbReference type="Gene3D" id="3.40.50.360">
    <property type="match status" value="1"/>
</dbReference>
<dbReference type="HAMAP" id="MF_01017">
    <property type="entry name" value="NQOR"/>
    <property type="match status" value="1"/>
</dbReference>
<dbReference type="InterPro" id="IPR008254">
    <property type="entry name" value="Flavodoxin/NO_synth"/>
</dbReference>
<dbReference type="InterPro" id="IPR001226">
    <property type="entry name" value="Flavodoxin_CS"/>
</dbReference>
<dbReference type="InterPro" id="IPR029039">
    <property type="entry name" value="Flavoprotein-like_sf"/>
</dbReference>
<dbReference type="InterPro" id="IPR010089">
    <property type="entry name" value="Flavoprotein_WrbA-like"/>
</dbReference>
<dbReference type="InterPro" id="IPR005025">
    <property type="entry name" value="FMN_Rdtase-like_dom"/>
</dbReference>
<dbReference type="InterPro" id="IPR037513">
    <property type="entry name" value="NQO"/>
</dbReference>
<dbReference type="NCBIfam" id="TIGR01755">
    <property type="entry name" value="flav_wrbA"/>
    <property type="match status" value="1"/>
</dbReference>
<dbReference type="NCBIfam" id="NF002999">
    <property type="entry name" value="PRK03767.1"/>
    <property type="match status" value="1"/>
</dbReference>
<dbReference type="PANTHER" id="PTHR30546">
    <property type="entry name" value="FLAVODOXIN-RELATED PROTEIN WRBA-RELATED"/>
    <property type="match status" value="1"/>
</dbReference>
<dbReference type="PANTHER" id="PTHR30546:SF23">
    <property type="entry name" value="FLAVOPROTEIN-LIKE PROTEIN YCP4-RELATED"/>
    <property type="match status" value="1"/>
</dbReference>
<dbReference type="Pfam" id="PF03358">
    <property type="entry name" value="FMN_red"/>
    <property type="match status" value="1"/>
</dbReference>
<dbReference type="SUPFAM" id="SSF52218">
    <property type="entry name" value="Flavoproteins"/>
    <property type="match status" value="1"/>
</dbReference>
<dbReference type="PROSITE" id="PS50902">
    <property type="entry name" value="FLAVODOXIN_LIKE"/>
    <property type="match status" value="1"/>
</dbReference>
<name>NQOR_METBF</name>